<reference key="1">
    <citation type="journal article" date="2009" name="Stand. Genomic Sci.">
        <title>Complete genome sequence of Methanocorpusculum labreanum type strain Z.</title>
        <authorList>
            <person name="Anderson I.J."/>
            <person name="Sieprawska-Lupa M."/>
            <person name="Goltsman E."/>
            <person name="Lapidus A."/>
            <person name="Copeland A."/>
            <person name="Glavina Del Rio T."/>
            <person name="Tice H."/>
            <person name="Dalin E."/>
            <person name="Barry K."/>
            <person name="Pitluck S."/>
            <person name="Hauser L."/>
            <person name="Land M."/>
            <person name="Lucas S."/>
            <person name="Richardson P."/>
            <person name="Whitman W.B."/>
            <person name="Kyrpides N.C."/>
        </authorList>
    </citation>
    <scope>NUCLEOTIDE SEQUENCE [LARGE SCALE GENOMIC DNA]</scope>
    <source>
        <strain>ATCC 43576 / DSM 4855 / Z</strain>
    </source>
</reference>
<dbReference type="EC" id="3.1.-.-" evidence="1"/>
<dbReference type="EMBL" id="CP000559">
    <property type="protein sequence ID" value="ABN06713.1"/>
    <property type="molecule type" value="Genomic_DNA"/>
</dbReference>
<dbReference type="RefSeq" id="WP_011832914.1">
    <property type="nucleotide sequence ID" value="NC_008942.1"/>
</dbReference>
<dbReference type="SMR" id="A2SQV7"/>
<dbReference type="STRING" id="410358.Mlab_0539"/>
<dbReference type="GeneID" id="4794737"/>
<dbReference type="KEGG" id="mla:Mlab_0539"/>
<dbReference type="eggNOG" id="arCOG01741">
    <property type="taxonomic scope" value="Archaea"/>
</dbReference>
<dbReference type="HOGENOM" id="CLU_023334_0_0_2"/>
<dbReference type="OrthoDB" id="31300at2157"/>
<dbReference type="Proteomes" id="UP000000365">
    <property type="component" value="Chromosome"/>
</dbReference>
<dbReference type="GO" id="GO:0005737">
    <property type="term" value="C:cytoplasm"/>
    <property type="evidence" value="ECO:0007669"/>
    <property type="project" value="UniProtKB-SubCell"/>
</dbReference>
<dbReference type="GO" id="GO:0004519">
    <property type="term" value="F:endonuclease activity"/>
    <property type="evidence" value="ECO:0007669"/>
    <property type="project" value="UniProtKB-UniRule"/>
</dbReference>
<dbReference type="GO" id="GO:0046872">
    <property type="term" value="F:metal ion binding"/>
    <property type="evidence" value="ECO:0007669"/>
    <property type="project" value="UniProtKB-UniRule"/>
</dbReference>
<dbReference type="GO" id="GO:0070651">
    <property type="term" value="P:nonfunctional rRNA decay"/>
    <property type="evidence" value="ECO:0007669"/>
    <property type="project" value="TreeGrafter"/>
</dbReference>
<dbReference type="GO" id="GO:0070966">
    <property type="term" value="P:nuclear-transcribed mRNA catabolic process, no-go decay"/>
    <property type="evidence" value="ECO:0007669"/>
    <property type="project" value="InterPro"/>
</dbReference>
<dbReference type="GO" id="GO:0070481">
    <property type="term" value="P:nuclear-transcribed mRNA catabolic process, non-stop decay"/>
    <property type="evidence" value="ECO:0007669"/>
    <property type="project" value="InterPro"/>
</dbReference>
<dbReference type="GO" id="GO:0032790">
    <property type="term" value="P:ribosome disassembly"/>
    <property type="evidence" value="ECO:0007669"/>
    <property type="project" value="TreeGrafter"/>
</dbReference>
<dbReference type="GO" id="GO:0071025">
    <property type="term" value="P:RNA surveillance"/>
    <property type="evidence" value="ECO:0007669"/>
    <property type="project" value="InterPro"/>
</dbReference>
<dbReference type="Gene3D" id="3.30.1330.30">
    <property type="match status" value="1"/>
</dbReference>
<dbReference type="Gene3D" id="3.30.420.60">
    <property type="entry name" value="eRF1 domain 2"/>
    <property type="match status" value="1"/>
</dbReference>
<dbReference type="Gene3D" id="2.30.30.870">
    <property type="entry name" value="Pelota, domain A"/>
    <property type="match status" value="1"/>
</dbReference>
<dbReference type="HAMAP" id="MF_01853">
    <property type="entry name" value="PelO"/>
    <property type="match status" value="1"/>
</dbReference>
<dbReference type="InterPro" id="IPR042226">
    <property type="entry name" value="eFR1_2_sf"/>
</dbReference>
<dbReference type="InterPro" id="IPR005140">
    <property type="entry name" value="eRF1_1_Pelota"/>
</dbReference>
<dbReference type="InterPro" id="IPR005142">
    <property type="entry name" value="eRF1_3"/>
</dbReference>
<dbReference type="InterPro" id="IPR038069">
    <property type="entry name" value="Pelota/DOM34_N"/>
</dbReference>
<dbReference type="InterPro" id="IPR023521">
    <property type="entry name" value="Pelota_arc"/>
</dbReference>
<dbReference type="InterPro" id="IPR029064">
    <property type="entry name" value="Ribosomal_eL30-like_sf"/>
</dbReference>
<dbReference type="InterPro" id="IPR004405">
    <property type="entry name" value="Transl-rel_pelota"/>
</dbReference>
<dbReference type="NCBIfam" id="TIGR00111">
    <property type="entry name" value="pelota"/>
    <property type="match status" value="1"/>
</dbReference>
<dbReference type="PANTHER" id="PTHR10853">
    <property type="entry name" value="PELOTA"/>
    <property type="match status" value="1"/>
</dbReference>
<dbReference type="PANTHER" id="PTHR10853:SF0">
    <property type="entry name" value="PROTEIN PELOTA HOMOLOG"/>
    <property type="match status" value="1"/>
</dbReference>
<dbReference type="Pfam" id="PF03463">
    <property type="entry name" value="eRF1_1"/>
    <property type="match status" value="1"/>
</dbReference>
<dbReference type="Pfam" id="PF03465">
    <property type="entry name" value="eRF1_3"/>
    <property type="match status" value="1"/>
</dbReference>
<dbReference type="SMART" id="SM01194">
    <property type="entry name" value="eRF1_1"/>
    <property type="match status" value="1"/>
</dbReference>
<dbReference type="SUPFAM" id="SSF159065">
    <property type="entry name" value="Dom34/Pelota N-terminal domain-like"/>
    <property type="match status" value="1"/>
</dbReference>
<dbReference type="SUPFAM" id="SSF55315">
    <property type="entry name" value="L30e-like"/>
    <property type="match status" value="1"/>
</dbReference>
<dbReference type="SUPFAM" id="SSF53137">
    <property type="entry name" value="Translational machinery components"/>
    <property type="match status" value="1"/>
</dbReference>
<protein>
    <recommendedName>
        <fullName evidence="1">Protein pelota homolog</fullName>
        <ecNumber evidence="1">3.1.-.-</ecNumber>
    </recommendedName>
</protein>
<organism>
    <name type="scientific">Methanocorpusculum labreanum (strain ATCC 43576 / DSM 4855 / Z)</name>
    <dbReference type="NCBI Taxonomy" id="410358"/>
    <lineage>
        <taxon>Archaea</taxon>
        <taxon>Methanobacteriati</taxon>
        <taxon>Methanobacteriota</taxon>
        <taxon>Stenosarchaea group</taxon>
        <taxon>Methanomicrobia</taxon>
        <taxon>Methanomicrobiales</taxon>
        <taxon>Methanocorpusculaceae</taxon>
        <taxon>Methanocorpusculum</taxon>
    </lineage>
</organism>
<keyword id="KW-0963">Cytoplasm</keyword>
<keyword id="KW-0255">Endonuclease</keyword>
<keyword id="KW-0378">Hydrolase</keyword>
<keyword id="KW-0479">Metal-binding</keyword>
<keyword id="KW-0540">Nuclease</keyword>
<keyword id="KW-1185">Reference proteome</keyword>
<sequence>MKAELPEPLKKDGFGEYKLMPESIDDLWHLSHLISPGNTVYAVTLRTVDGPSDKLRSEKLEKRPVRIGVKCEKAEFVPESSRLRVFGVISYGPDMGQHHTLNIEAGYEISVVRQWRQIDLARLERAVSSSVHGVVHIAAIEDGEAELYRVRQYGPERITTLTVGSGKTAELDSRQALFAELLTFLEKVTGSIVIAGPGFVKEDFVKFAKTKAPEIAERMLIADTRRCGYGAVQEAIGNGVLTRVAEDLQLAKEVSFMDEVFLRIGQNGAVAYGKSEVRQAIDYGAAETILVADSFVKDGGIEKMIEGAERLGANVVVLSTEFEPGTRLVGLGGVAALLRYKI</sequence>
<gene>
    <name evidence="1" type="primary">pelA</name>
    <name type="ordered locus">Mlab_0539</name>
</gene>
<evidence type="ECO:0000255" key="1">
    <source>
        <dbReference type="HAMAP-Rule" id="MF_01853"/>
    </source>
</evidence>
<feature type="chain" id="PRO_0000361800" description="Protein pelota homolog">
    <location>
        <begin position="1"/>
        <end position="342"/>
    </location>
</feature>
<name>PELO_METLZ</name>
<proteinExistence type="inferred from homology"/>
<comment type="function">
    <text evidence="1">May function in recognizing stalled ribosomes, interact with stem-loop structures in stalled mRNA molecules, and effect endonucleolytic cleavage of the mRNA. May play a role in the release non-functional ribosomes and degradation of damaged mRNAs. Has endoribonuclease activity.</text>
</comment>
<comment type="cofactor">
    <cofactor evidence="1">
        <name>a divalent metal cation</name>
        <dbReference type="ChEBI" id="CHEBI:60240"/>
    </cofactor>
</comment>
<comment type="subunit">
    <text evidence="1">Monomer.</text>
</comment>
<comment type="subcellular location">
    <subcellularLocation>
        <location evidence="1">Cytoplasm</location>
    </subcellularLocation>
</comment>
<comment type="domain">
    <text evidence="1">The N-terminal domain has the RNA-binding Sm fold. It harbors the endoribonuclease activity.</text>
</comment>
<comment type="similarity">
    <text evidence="1">Belongs to the eukaryotic release factor 1 family. Pelota subfamily.</text>
</comment>
<accession>A2SQV7</accession>